<reference key="1">
    <citation type="journal article" date="1997" name="Plant Mol. Biol.">
        <title>Characterization of 26S proteasome alpha- and beta-type and ATPase subunits from spinach and their expression during early stages of seedling development.</title>
        <authorList>
            <person name="Ito N."/>
            <person name="Tomizawa K."/>
            <person name="Tanaka K."/>
            <person name="Matsui M."/>
            <person name="Kendrick R.E."/>
            <person name="Sato T."/>
            <person name="Nakagawa H."/>
        </authorList>
    </citation>
    <scope>NUCLEOTIDE SEQUENCE [MRNA]</scope>
</reference>
<comment type="function">
    <text>The proteasome is a multicatalytic proteinase complex which is characterized by its ability to cleave peptides with Arg, Phe, Tyr, Leu, and Glu adjacent to the leaving group at neutral or slightly basic pH. The proteasome has an ATP-dependent proteolytic activity.</text>
</comment>
<comment type="subunit">
    <text>The 26S proteasome consists of a 20S proteasome core and two 19S regulatory subunits. The 20S proteasome core is composed of 28 subunits that are arranged in four stacked rings, resulting in a barrel-shaped structure. The two end rings are each formed by seven alpha subunits, and the two central rings are each formed by seven beta subunits. The catalytic chamber with the active sites is on the inside of the barrel.</text>
</comment>
<comment type="subcellular location">
    <subcellularLocation>
        <location evidence="1">Cytoplasm</location>
    </subcellularLocation>
    <subcellularLocation>
        <location evidence="1">Nucleus</location>
    </subcellularLocation>
</comment>
<comment type="similarity">
    <text evidence="2">Belongs to the peptidase T1A family.</text>
</comment>
<feature type="chain" id="PRO_0000124100" description="Proteasome subunit alpha type-3">
    <location>
        <begin position="1"/>
        <end position="249"/>
    </location>
</feature>
<feature type="turn" evidence="3">
    <location>
        <begin position="17"/>
        <end position="19"/>
    </location>
</feature>
<feature type="helix" evidence="3">
    <location>
        <begin position="22"/>
        <end position="32"/>
    </location>
</feature>
<feature type="strand" evidence="3">
    <location>
        <begin position="37"/>
        <end position="42"/>
    </location>
</feature>
<feature type="strand" evidence="3">
    <location>
        <begin position="45"/>
        <end position="53"/>
    </location>
</feature>
<feature type="turn" evidence="3">
    <location>
        <begin position="61"/>
        <end position="64"/>
    </location>
</feature>
<feature type="strand" evidence="3">
    <location>
        <begin position="67"/>
        <end position="71"/>
    </location>
</feature>
<feature type="strand" evidence="3">
    <location>
        <begin position="74"/>
        <end position="80"/>
    </location>
</feature>
<feature type="helix" evidence="3">
    <location>
        <begin position="82"/>
        <end position="103"/>
    </location>
</feature>
<feature type="helix" evidence="3">
    <location>
        <begin position="109"/>
        <end position="125"/>
    </location>
</feature>
<feature type="strand" evidence="3">
    <location>
        <begin position="134"/>
        <end position="138"/>
    </location>
</feature>
<feature type="strand" evidence="3">
    <location>
        <begin position="148"/>
        <end position="151"/>
    </location>
</feature>
<feature type="strand" evidence="3">
    <location>
        <begin position="157"/>
        <end position="166"/>
    </location>
</feature>
<feature type="helix" evidence="3">
    <location>
        <begin position="169"/>
        <end position="177"/>
    </location>
</feature>
<feature type="helix" evidence="3">
    <location>
        <begin position="181"/>
        <end position="183"/>
    </location>
</feature>
<feature type="helix" evidence="3">
    <location>
        <begin position="186"/>
        <end position="200"/>
    </location>
</feature>
<feature type="turn" evidence="3">
    <location>
        <begin position="203"/>
        <end position="205"/>
    </location>
</feature>
<feature type="strand" evidence="3">
    <location>
        <begin position="209"/>
        <end position="217"/>
    </location>
</feature>
<feature type="turn" evidence="3">
    <location>
        <begin position="218"/>
        <end position="222"/>
    </location>
</feature>
<feature type="helix" evidence="3">
    <location>
        <begin position="229"/>
        <end position="241"/>
    </location>
</feature>
<sequence>MSSIGTGYDLSVTTFSPDGRVFQIEYAAKAVDNSGTAVGIKCKDGIVLGVEKLIQSKMMLPGSNRRIHSVHRHSGMAVAGLAADGRQIVARAKSEATNYESVYGEAVPVKELADRVASYVHLCTLYWWLRPFGCGVILGGYDRDGPQLYMVEPSGISYRYFGAAIGKGKQAAKTEIEKLKLSEMTCREGIIEVAKIIYKVHDEAKDKAFELEMSWICDESKREHQKVPDNLLQEAKAAATAALEEMDAD</sequence>
<accession>O24362</accession>
<name>PSA3_SPIOL</name>
<proteinExistence type="evidence at protein level"/>
<evidence type="ECO:0000250" key="1"/>
<evidence type="ECO:0000255" key="2">
    <source>
        <dbReference type="PROSITE-ProRule" id="PRU00808"/>
    </source>
</evidence>
<evidence type="ECO:0007829" key="3">
    <source>
        <dbReference type="PDB" id="7QVE"/>
    </source>
</evidence>
<dbReference type="EMBL" id="D78173">
    <property type="protein sequence ID" value="BAA21651.1"/>
    <property type="molecule type" value="mRNA"/>
</dbReference>
<dbReference type="PIR" id="T09139">
    <property type="entry name" value="T09139"/>
</dbReference>
<dbReference type="PDB" id="7QVE">
    <property type="method" value="EM"/>
    <property type="resolution" value="3.30 A"/>
    <property type="chains" value="X/n=1-249"/>
</dbReference>
<dbReference type="PDBsum" id="7QVE"/>
<dbReference type="EMDB" id="EMD-14175"/>
<dbReference type="SMR" id="O24362"/>
<dbReference type="OrthoDB" id="431557at2759"/>
<dbReference type="Proteomes" id="UP001155700">
    <property type="component" value="Unplaced"/>
</dbReference>
<dbReference type="GO" id="GO:0005737">
    <property type="term" value="C:cytoplasm"/>
    <property type="evidence" value="ECO:0007669"/>
    <property type="project" value="UniProtKB-SubCell"/>
</dbReference>
<dbReference type="GO" id="GO:0005634">
    <property type="term" value="C:nucleus"/>
    <property type="evidence" value="ECO:0000318"/>
    <property type="project" value="GO_Central"/>
</dbReference>
<dbReference type="GO" id="GO:0019773">
    <property type="term" value="C:proteasome core complex, alpha-subunit complex"/>
    <property type="evidence" value="ECO:0000250"/>
    <property type="project" value="UniProtKB"/>
</dbReference>
<dbReference type="GO" id="GO:0043161">
    <property type="term" value="P:proteasome-mediated ubiquitin-dependent protein catabolic process"/>
    <property type="evidence" value="ECO:0000318"/>
    <property type="project" value="GO_Central"/>
</dbReference>
<dbReference type="CDD" id="cd03751">
    <property type="entry name" value="proteasome_alpha_type_3"/>
    <property type="match status" value="1"/>
</dbReference>
<dbReference type="FunFam" id="3.60.20.10:FF:000007">
    <property type="entry name" value="Proteasome subunit alpha type"/>
    <property type="match status" value="1"/>
</dbReference>
<dbReference type="Gene3D" id="3.60.20.10">
    <property type="entry name" value="Glutamine Phosphoribosylpyrophosphate, subunit 1, domain 1"/>
    <property type="match status" value="1"/>
</dbReference>
<dbReference type="InterPro" id="IPR029055">
    <property type="entry name" value="Ntn_hydrolases_N"/>
</dbReference>
<dbReference type="InterPro" id="IPR050115">
    <property type="entry name" value="Proteasome_alpha"/>
</dbReference>
<dbReference type="InterPro" id="IPR023332">
    <property type="entry name" value="Proteasome_alpha-type"/>
</dbReference>
<dbReference type="InterPro" id="IPR000426">
    <property type="entry name" value="Proteasome_asu_N"/>
</dbReference>
<dbReference type="InterPro" id="IPR001353">
    <property type="entry name" value="Proteasome_sua/b"/>
</dbReference>
<dbReference type="PANTHER" id="PTHR11599">
    <property type="entry name" value="PROTEASOME SUBUNIT ALPHA/BETA"/>
    <property type="match status" value="1"/>
</dbReference>
<dbReference type="Pfam" id="PF00227">
    <property type="entry name" value="Proteasome"/>
    <property type="match status" value="1"/>
</dbReference>
<dbReference type="Pfam" id="PF10584">
    <property type="entry name" value="Proteasome_A_N"/>
    <property type="match status" value="1"/>
</dbReference>
<dbReference type="SMART" id="SM00948">
    <property type="entry name" value="Proteasome_A_N"/>
    <property type="match status" value="1"/>
</dbReference>
<dbReference type="SUPFAM" id="SSF56235">
    <property type="entry name" value="N-terminal nucleophile aminohydrolases (Ntn hydrolases)"/>
    <property type="match status" value="1"/>
</dbReference>
<dbReference type="PROSITE" id="PS00388">
    <property type="entry name" value="PROTEASOME_ALPHA_1"/>
    <property type="match status" value="1"/>
</dbReference>
<dbReference type="PROSITE" id="PS51475">
    <property type="entry name" value="PROTEASOME_ALPHA_2"/>
    <property type="match status" value="1"/>
</dbReference>
<keyword id="KW-0002">3D-structure</keyword>
<keyword id="KW-0963">Cytoplasm</keyword>
<keyword id="KW-0539">Nucleus</keyword>
<keyword id="KW-0647">Proteasome</keyword>
<keyword id="KW-1185">Reference proteome</keyword>
<gene>
    <name type="primary">PAG1</name>
    <name type="synonym">PSC8</name>
</gene>
<organism>
    <name type="scientific">Spinacia oleracea</name>
    <name type="common">Spinach</name>
    <dbReference type="NCBI Taxonomy" id="3562"/>
    <lineage>
        <taxon>Eukaryota</taxon>
        <taxon>Viridiplantae</taxon>
        <taxon>Streptophyta</taxon>
        <taxon>Embryophyta</taxon>
        <taxon>Tracheophyta</taxon>
        <taxon>Spermatophyta</taxon>
        <taxon>Magnoliopsida</taxon>
        <taxon>eudicotyledons</taxon>
        <taxon>Gunneridae</taxon>
        <taxon>Pentapetalae</taxon>
        <taxon>Caryophyllales</taxon>
        <taxon>Chenopodiaceae</taxon>
        <taxon>Chenopodioideae</taxon>
        <taxon>Anserineae</taxon>
        <taxon>Spinacia</taxon>
    </lineage>
</organism>
<protein>
    <recommendedName>
        <fullName>Proteasome subunit alpha type-3</fullName>
    </recommendedName>
    <alternativeName>
        <fullName>20S proteasome alpha subunit G</fullName>
    </alternativeName>
    <alternativeName>
        <fullName>20S proteasome subunit alpha-7</fullName>
    </alternativeName>
    <alternativeName>
        <fullName>Proteasome component C8</fullName>
    </alternativeName>
</protein>